<sequence>MYDSKKLELKWQEIWDKEGIFEPKKDYNLQKKYILSMFPYPSGRIHMGHVRNYTIGDAISRYYRMQGYNVLQPIGFDSFGMPAENAAIKHKIHPKKWTYDNIDYMTKELFRLGFSFSKNRILATSDPIYTKFEQEFFIKMFEKGLIYRKNAVVNWCEQDQTVLANEQVEDGKCWRCGNEVVQKEMPGYYLKITSYADELLSCLKDLQNHWPSQVITMQENWIGKSFGLEFDFKFDDESSKKLGGVKSFKVFTTRPDTIYGMSYAALAPEHAVVKAVLEKNLVSKETADKIKKILNQSPRERQANDKDGAFLNLFAIHPLSGKKIPVWMANFVLAEYGGGAVMAVPAHDERDFEFAHKFNLPIIQSIGAKNGENVKLPYIESGILVDSAEFSGLENEDAKMKIIEKFEKEKIGKRVTNYKLRDWGISRQRYWGAPIPMIKCPKCGLVPEKIKNLPVTLPDDIKITGKGNPLDKHPTWKHCTCPKCGAEAERETDTLDTFFDSSWYFARFTSDENMWQEKGIDEKSANYWMNVDQYIGGIEHAILHLLYARFFQKVLRDLGYLRDSEPFANLLTQGMVLKDGAKMSKSKGNVVDPDEIIEKYGADTARLFILFAAPPQKELEWNDSAVEGAYKFLNRLYERSQNVQKTREIPKIDQSSLNKAEKYARLKVYEALQKSSEVYEKTFAFNTLIAACMEALNALNAQENRQILTEGYFIILNLLDPIVPHIACELSENLFGRANFTPIKILPEVFEKDEIRLAVTVNGKKRAEIEVASDLSQSEILKIAKEQVLKWLENKKIIKEIYIKNKLVNLVVK</sequence>
<accession>A7I0M0</accession>
<keyword id="KW-0030">Aminoacyl-tRNA synthetase</keyword>
<keyword id="KW-0067">ATP-binding</keyword>
<keyword id="KW-0963">Cytoplasm</keyword>
<keyword id="KW-0436">Ligase</keyword>
<keyword id="KW-0547">Nucleotide-binding</keyword>
<keyword id="KW-0648">Protein biosynthesis</keyword>
<keyword id="KW-1185">Reference proteome</keyword>
<feature type="chain" id="PRO_0000334740" description="Leucine--tRNA ligase">
    <location>
        <begin position="1"/>
        <end position="813"/>
    </location>
</feature>
<feature type="short sequence motif" description="'HIGH' region">
    <location>
        <begin position="39"/>
        <end position="49"/>
    </location>
</feature>
<feature type="short sequence motif" description="'KMSKS' region">
    <location>
        <begin position="582"/>
        <end position="586"/>
    </location>
</feature>
<feature type="binding site" evidence="1">
    <location>
        <position position="585"/>
    </location>
    <ligand>
        <name>ATP</name>
        <dbReference type="ChEBI" id="CHEBI:30616"/>
    </ligand>
</feature>
<reference key="1">
    <citation type="submission" date="2007-07" db="EMBL/GenBank/DDBJ databases">
        <title>Complete genome sequence of Campylobacter hominis ATCC BAA-381, a commensal isolated from the human gastrointestinal tract.</title>
        <authorList>
            <person name="Fouts D.E."/>
            <person name="Mongodin E.F."/>
            <person name="Puiu D."/>
            <person name="Sebastian Y."/>
            <person name="Miller W.G."/>
            <person name="Mandrell R.E."/>
            <person name="Nelson K.E."/>
        </authorList>
    </citation>
    <scope>NUCLEOTIDE SEQUENCE [LARGE SCALE GENOMIC DNA]</scope>
    <source>
        <strain>ATCC BAA-381 / DSM 21671 / CCUG 45161 / LMG 19568 / NCTC 13146 / CH001A</strain>
    </source>
</reference>
<proteinExistence type="inferred from homology"/>
<organism>
    <name type="scientific">Campylobacter hominis (strain ATCC BAA-381 / DSM 21671 / CCUG 45161 / LMG 19568 / NCTC 13146 / CH001A)</name>
    <dbReference type="NCBI Taxonomy" id="360107"/>
    <lineage>
        <taxon>Bacteria</taxon>
        <taxon>Pseudomonadati</taxon>
        <taxon>Campylobacterota</taxon>
        <taxon>Epsilonproteobacteria</taxon>
        <taxon>Campylobacterales</taxon>
        <taxon>Campylobacteraceae</taxon>
        <taxon>Campylobacter</taxon>
    </lineage>
</organism>
<name>SYL_CAMHC</name>
<protein>
    <recommendedName>
        <fullName evidence="1">Leucine--tRNA ligase</fullName>
        <ecNumber evidence="1">6.1.1.4</ecNumber>
    </recommendedName>
    <alternativeName>
        <fullName evidence="1">Leucyl-tRNA synthetase</fullName>
        <shortName evidence="1">LeuRS</shortName>
    </alternativeName>
</protein>
<comment type="catalytic activity">
    <reaction evidence="1">
        <text>tRNA(Leu) + L-leucine + ATP = L-leucyl-tRNA(Leu) + AMP + diphosphate</text>
        <dbReference type="Rhea" id="RHEA:11688"/>
        <dbReference type="Rhea" id="RHEA-COMP:9613"/>
        <dbReference type="Rhea" id="RHEA-COMP:9622"/>
        <dbReference type="ChEBI" id="CHEBI:30616"/>
        <dbReference type="ChEBI" id="CHEBI:33019"/>
        <dbReference type="ChEBI" id="CHEBI:57427"/>
        <dbReference type="ChEBI" id="CHEBI:78442"/>
        <dbReference type="ChEBI" id="CHEBI:78494"/>
        <dbReference type="ChEBI" id="CHEBI:456215"/>
        <dbReference type="EC" id="6.1.1.4"/>
    </reaction>
</comment>
<comment type="subcellular location">
    <subcellularLocation>
        <location evidence="1">Cytoplasm</location>
    </subcellularLocation>
</comment>
<comment type="similarity">
    <text evidence="1">Belongs to the class-I aminoacyl-tRNA synthetase family.</text>
</comment>
<evidence type="ECO:0000255" key="1">
    <source>
        <dbReference type="HAMAP-Rule" id="MF_00049"/>
    </source>
</evidence>
<dbReference type="EC" id="6.1.1.4" evidence="1"/>
<dbReference type="EMBL" id="CP000776">
    <property type="protein sequence ID" value="ABS52208.1"/>
    <property type="molecule type" value="Genomic_DNA"/>
</dbReference>
<dbReference type="RefSeq" id="WP_012108346.1">
    <property type="nucleotide sequence ID" value="NC_009714.1"/>
</dbReference>
<dbReference type="SMR" id="A7I0M0"/>
<dbReference type="STRING" id="360107.CHAB381_0473"/>
<dbReference type="KEGG" id="cha:CHAB381_0473"/>
<dbReference type="eggNOG" id="COG0495">
    <property type="taxonomic scope" value="Bacteria"/>
</dbReference>
<dbReference type="HOGENOM" id="CLU_004427_0_0_7"/>
<dbReference type="OrthoDB" id="9810365at2"/>
<dbReference type="Proteomes" id="UP000002407">
    <property type="component" value="Chromosome"/>
</dbReference>
<dbReference type="GO" id="GO:0005829">
    <property type="term" value="C:cytosol"/>
    <property type="evidence" value="ECO:0007669"/>
    <property type="project" value="TreeGrafter"/>
</dbReference>
<dbReference type="GO" id="GO:0002161">
    <property type="term" value="F:aminoacyl-tRNA deacylase activity"/>
    <property type="evidence" value="ECO:0007669"/>
    <property type="project" value="InterPro"/>
</dbReference>
<dbReference type="GO" id="GO:0005524">
    <property type="term" value="F:ATP binding"/>
    <property type="evidence" value="ECO:0007669"/>
    <property type="project" value="UniProtKB-UniRule"/>
</dbReference>
<dbReference type="GO" id="GO:0004823">
    <property type="term" value="F:leucine-tRNA ligase activity"/>
    <property type="evidence" value="ECO:0007669"/>
    <property type="project" value="UniProtKB-UniRule"/>
</dbReference>
<dbReference type="GO" id="GO:0006429">
    <property type="term" value="P:leucyl-tRNA aminoacylation"/>
    <property type="evidence" value="ECO:0007669"/>
    <property type="project" value="UniProtKB-UniRule"/>
</dbReference>
<dbReference type="CDD" id="cd07958">
    <property type="entry name" value="Anticodon_Ia_Leu_BEm"/>
    <property type="match status" value="1"/>
</dbReference>
<dbReference type="CDD" id="cd00812">
    <property type="entry name" value="LeuRS_core"/>
    <property type="match status" value="1"/>
</dbReference>
<dbReference type="FunFam" id="1.10.730.10:FF:000002">
    <property type="entry name" value="Leucine--tRNA ligase"/>
    <property type="match status" value="1"/>
</dbReference>
<dbReference type="FunFam" id="3.40.50.620:FF:000003">
    <property type="entry name" value="Leucine--tRNA ligase"/>
    <property type="match status" value="1"/>
</dbReference>
<dbReference type="FunFam" id="3.40.50.620:FF:000056">
    <property type="entry name" value="Leucine--tRNA ligase"/>
    <property type="match status" value="1"/>
</dbReference>
<dbReference type="Gene3D" id="3.10.20.590">
    <property type="match status" value="1"/>
</dbReference>
<dbReference type="Gene3D" id="3.40.50.620">
    <property type="entry name" value="HUPs"/>
    <property type="match status" value="2"/>
</dbReference>
<dbReference type="Gene3D" id="1.10.730.10">
    <property type="entry name" value="Isoleucyl-tRNA Synthetase, Domain 1"/>
    <property type="match status" value="1"/>
</dbReference>
<dbReference type="HAMAP" id="MF_00049_B">
    <property type="entry name" value="Leu_tRNA_synth_B"/>
    <property type="match status" value="1"/>
</dbReference>
<dbReference type="InterPro" id="IPR001412">
    <property type="entry name" value="aa-tRNA-synth_I_CS"/>
</dbReference>
<dbReference type="InterPro" id="IPR002302">
    <property type="entry name" value="Leu-tRNA-ligase"/>
</dbReference>
<dbReference type="InterPro" id="IPR025709">
    <property type="entry name" value="Leu_tRNA-synth_edit"/>
</dbReference>
<dbReference type="InterPro" id="IPR013155">
    <property type="entry name" value="M/V/L/I-tRNA-synth_anticd-bd"/>
</dbReference>
<dbReference type="InterPro" id="IPR015413">
    <property type="entry name" value="Methionyl/Leucyl_tRNA_Synth"/>
</dbReference>
<dbReference type="InterPro" id="IPR014729">
    <property type="entry name" value="Rossmann-like_a/b/a_fold"/>
</dbReference>
<dbReference type="InterPro" id="IPR009080">
    <property type="entry name" value="tRNAsynth_Ia_anticodon-bd"/>
</dbReference>
<dbReference type="InterPro" id="IPR009008">
    <property type="entry name" value="Val/Leu/Ile-tRNA-synth_edit"/>
</dbReference>
<dbReference type="NCBIfam" id="TIGR00396">
    <property type="entry name" value="leuS_bact"/>
    <property type="match status" value="1"/>
</dbReference>
<dbReference type="PANTHER" id="PTHR43740:SF2">
    <property type="entry name" value="LEUCINE--TRNA LIGASE, MITOCHONDRIAL"/>
    <property type="match status" value="1"/>
</dbReference>
<dbReference type="PANTHER" id="PTHR43740">
    <property type="entry name" value="LEUCYL-TRNA SYNTHETASE"/>
    <property type="match status" value="1"/>
</dbReference>
<dbReference type="Pfam" id="PF08264">
    <property type="entry name" value="Anticodon_1"/>
    <property type="match status" value="1"/>
</dbReference>
<dbReference type="Pfam" id="PF13603">
    <property type="entry name" value="tRNA-synt_1_2"/>
    <property type="match status" value="1"/>
</dbReference>
<dbReference type="Pfam" id="PF09334">
    <property type="entry name" value="tRNA-synt_1g"/>
    <property type="match status" value="2"/>
</dbReference>
<dbReference type="PRINTS" id="PR00985">
    <property type="entry name" value="TRNASYNTHLEU"/>
</dbReference>
<dbReference type="SUPFAM" id="SSF47323">
    <property type="entry name" value="Anticodon-binding domain of a subclass of class I aminoacyl-tRNA synthetases"/>
    <property type="match status" value="1"/>
</dbReference>
<dbReference type="SUPFAM" id="SSF52374">
    <property type="entry name" value="Nucleotidylyl transferase"/>
    <property type="match status" value="1"/>
</dbReference>
<dbReference type="SUPFAM" id="SSF50677">
    <property type="entry name" value="ValRS/IleRS/LeuRS editing domain"/>
    <property type="match status" value="1"/>
</dbReference>
<dbReference type="PROSITE" id="PS00178">
    <property type="entry name" value="AA_TRNA_LIGASE_I"/>
    <property type="match status" value="1"/>
</dbReference>
<gene>
    <name evidence="1" type="primary">leuS</name>
    <name type="ordered locus">CHAB381_0473</name>
</gene>